<evidence type="ECO:0000255" key="1">
    <source>
        <dbReference type="HAMAP-Rule" id="MF_04071"/>
    </source>
</evidence>
<name>NRAM_I63A1</name>
<reference key="1">
    <citation type="journal article" date="2005" name="Virus Res.">
        <title>New avian influenza A virus subtype combination H5N7 identified in Danish mallard ducks.</title>
        <authorList>
            <person name="Bragstad K."/>
            <person name="Jorgensen P.H."/>
            <person name="Handberg K.J."/>
            <person name="Mellergaard S."/>
            <person name="Corbet S."/>
            <person name="Fomsgaard A."/>
        </authorList>
    </citation>
    <scope>NUCLEOTIDE SEQUENCE [GENOMIC RNA]</scope>
</reference>
<reference key="2">
    <citation type="journal article" date="2004" name="Virus Res.">
        <title>Assembly and budding of influenza virus.</title>
        <authorList>
            <person name="Nayak D.P."/>
            <person name="Hui E.K."/>
            <person name="Barman S."/>
        </authorList>
    </citation>
    <scope>REVIEW</scope>
</reference>
<reference key="3">
    <citation type="journal article" date="2005" name="N. Engl. J. Med.">
        <title>Neuraminidase inhibitors for influenza.</title>
        <authorList>
            <person name="Moscona A."/>
        </authorList>
    </citation>
    <scope>REVIEW</scope>
</reference>
<reference key="4">
    <citation type="journal article" date="2005" name="Biol. Pharm. Bull.">
        <title>Sialobiology of influenza: molecular mechanism of host range variation of influenza viruses.</title>
        <authorList>
            <person name="Suzuki Y."/>
        </authorList>
    </citation>
    <scope>REVIEW</scope>
</reference>
<proteinExistence type="inferred from homology"/>
<keyword id="KW-0106">Calcium</keyword>
<keyword id="KW-1015">Disulfide bond</keyword>
<keyword id="KW-0325">Glycoprotein</keyword>
<keyword id="KW-0326">Glycosidase</keyword>
<keyword id="KW-1032">Host cell membrane</keyword>
<keyword id="KW-1043">Host membrane</keyword>
<keyword id="KW-0378">Hydrolase</keyword>
<keyword id="KW-0472">Membrane</keyword>
<keyword id="KW-0479">Metal-binding</keyword>
<keyword id="KW-0735">Signal-anchor</keyword>
<keyword id="KW-0812">Transmembrane</keyword>
<keyword id="KW-1133">Transmembrane helix</keyword>
<keyword id="KW-0946">Virion</keyword>
<comment type="function">
    <text evidence="1">Catalyzes the removal of terminal sialic acid residues from viral and cellular glycoconjugates. Cleaves off the terminal sialic acids on the glycosylated HA during virus budding to facilitate virus release. Additionally helps virus spread through the circulation by further removing sialic acids from the cell surface. These cleavages prevent self-aggregation and ensure the efficient spread of the progeny virus from cell to cell. Otherwise, infection would be limited to one round of replication. Described as a receptor-destroying enzyme because it cleaves a terminal sialic acid from the cellular receptors. May facilitate viral invasion of the upper airways by cleaving the sialic acid moieties on the mucin of the airway epithelial cells. Likely to plays a role in the budding process through its association with lipid rafts during intracellular transport. May additionally display a raft-association independent effect on budding. Plays a role in the determination of host range restriction on replication and virulence. Sialidase activity in late endosome/lysosome traffic seems to enhance virus replication.</text>
</comment>
<comment type="catalytic activity">
    <reaction evidence="1">
        <text>Hydrolysis of alpha-(2-&gt;3)-, alpha-(2-&gt;6)-, alpha-(2-&gt;8)- glycosidic linkages of terminal sialic acid residues in oligosaccharides, glycoproteins, glycolipids, colominic acid and synthetic substrates.</text>
        <dbReference type="EC" id="3.2.1.18"/>
    </reaction>
</comment>
<comment type="cofactor">
    <cofactor evidence="1">
        <name>Ca(2+)</name>
        <dbReference type="ChEBI" id="CHEBI:29108"/>
    </cofactor>
</comment>
<comment type="activity regulation">
    <text evidence="1">Inhibited by the neuraminidase inhibitors zanamivir (Relenza) and oseltamivir (Tamiflu). These drugs interfere with the release of progeny virus from infected cells and are effective against all influenza strains. Resistance to neuraminidase inhibitors is quite rare.</text>
</comment>
<comment type="subunit">
    <text evidence="1">Homotetramer.</text>
</comment>
<comment type="subcellular location">
    <subcellularLocation>
        <location evidence="1">Virion membrane</location>
    </subcellularLocation>
    <subcellularLocation>
        <location evidence="1">Host apical cell membrane</location>
        <topology evidence="1">Single-pass type II membrane protein</topology>
    </subcellularLocation>
    <text evidence="1">Preferentially accumulates at the apical plasma membrane in infected polarized epithelial cells, which is the virus assembly site. Uses lipid rafts for cell surface transport and apical sorting. In the virion, forms a mushroom-shaped spike on the surface of the membrane.</text>
</comment>
<comment type="domain">
    <text evidence="1">Intact N-terminus is essential for virion morphogenesis. Possesses two apical sorting signals, one in the ectodomain, which is likely to be a glycan, and the other in the transmembrane domain. The transmembrane domain also plays a role in lipid raft association.</text>
</comment>
<comment type="PTM">
    <text evidence="1">N-glycosylated.</text>
</comment>
<comment type="miscellaneous">
    <text>The influenza A genome consist of 8 RNA segments. Genetic variation of hemagglutinin and/or neuraminidase genes results in the emergence of new influenza strains. The mechanism of variation can be the result of point mutations or the result of genetic reassortment between segments of two different strains.</text>
</comment>
<comment type="similarity">
    <text evidence="1">Belongs to the glycosyl hydrolase 34 family.</text>
</comment>
<sequence length="470" mass="52266">MNPNQKIITIGSVSLGLVVLNILLHIVSITITVLVLPGNGNNGSCNETVIREYNETVRIEKIIQWHNTNVIEYIERPESDHFMNNTEPLCDAKGFAPFSKDNGIRIGSRGHVFVIREPFVSCSPTECRTFFLTQGSLLNDKHSNGTVKDRSPYRTLMSVEIGQSPNVYQARFEAVAWSATACHDGKKWMTIGVTGPDAKAVAVVHYGGIPTDVINSWAGDILRTQESSCTCIQGECYWVMTDGPANRQAQYRAFKAKQGKIIGQTEISFNGGHIEECSCYPNEGKVECVCRDNWTGTNRPVLVISSDLSYRVGYLCAGLPSDTPRGEDSQFTGSCTSPMGNQGYGVKGFGFRQGNDVWMGRTISRTSRSGFEILKVRNGWIQNSKEQIKRQVVVDNLNWSGYSGSFTLPVELTRRNCLVPCFWVEMIRGKPEEKTIWTSSSSIVMCGVDHEIADWSWHDGAILPFDIDKM</sequence>
<gene>
    <name evidence="1" type="primary">NA</name>
</gene>
<accession>Q595Z2</accession>
<organism>
    <name type="scientific">Influenza A virus (strain A/Turkey/Canada/1963 H6N8)</name>
    <dbReference type="NCBI Taxonomy" id="387262"/>
    <lineage>
        <taxon>Viruses</taxon>
        <taxon>Riboviria</taxon>
        <taxon>Orthornavirae</taxon>
        <taxon>Negarnaviricota</taxon>
        <taxon>Polyploviricotina</taxon>
        <taxon>Insthoviricetes</taxon>
        <taxon>Articulavirales</taxon>
        <taxon>Orthomyxoviridae</taxon>
        <taxon>Alphainfluenzavirus</taxon>
        <taxon>Alphainfluenzavirus influenzae</taxon>
        <taxon>Influenza A virus</taxon>
    </lineage>
</organism>
<protein>
    <recommendedName>
        <fullName evidence="1">Neuraminidase</fullName>
        <ecNumber evidence="1">3.2.1.18</ecNumber>
    </recommendedName>
</protein>
<organismHost>
    <name type="scientific">Aves</name>
    <dbReference type="NCBI Taxonomy" id="8782"/>
</organismHost>
<feature type="chain" id="PRO_0000280151" description="Neuraminidase">
    <location>
        <begin position="1"/>
        <end position="470"/>
    </location>
</feature>
<feature type="topological domain" description="Intravirion" evidence="1">
    <location>
        <begin position="1"/>
        <end position="14"/>
    </location>
</feature>
<feature type="transmembrane region" description="Helical" evidence="1">
    <location>
        <begin position="15"/>
        <end position="35"/>
    </location>
</feature>
<feature type="topological domain" description="Virion surface" evidence="1">
    <location>
        <begin position="36"/>
        <end position="470"/>
    </location>
</feature>
<feature type="region of interest" description="Involved in apical transport and lipid raft association" evidence="1">
    <location>
        <begin position="11"/>
        <end position="32"/>
    </location>
</feature>
<feature type="region of interest" description="Hypervariable stalk region" evidence="1">
    <location>
        <begin position="32"/>
        <end position="86"/>
    </location>
</feature>
<feature type="region of interest" description="Head of neuraminidase" evidence="1">
    <location>
        <begin position="89"/>
        <end position="470"/>
    </location>
</feature>
<feature type="active site" description="Proton donor/acceptor" evidence="1">
    <location>
        <position position="149"/>
    </location>
</feature>
<feature type="active site" description="Nucleophile" evidence="1">
    <location>
        <position position="402"/>
    </location>
</feature>
<feature type="binding site" evidence="1">
    <location>
        <position position="116"/>
    </location>
    <ligand>
        <name>substrate</name>
    </ligand>
</feature>
<feature type="binding site" evidence="1">
    <location>
        <position position="150"/>
    </location>
    <ligand>
        <name>substrate</name>
    </ligand>
</feature>
<feature type="binding site" evidence="1">
    <location>
        <begin position="275"/>
        <end position="276"/>
    </location>
    <ligand>
        <name>substrate</name>
    </ligand>
</feature>
<feature type="binding site" evidence="1">
    <location>
        <position position="291"/>
    </location>
    <ligand>
        <name>substrate</name>
    </ligand>
</feature>
<feature type="binding site" evidence="1">
    <location>
        <position position="292"/>
    </location>
    <ligand>
        <name>Ca(2+)</name>
        <dbReference type="ChEBI" id="CHEBI:29108"/>
    </ligand>
</feature>
<feature type="binding site" evidence="1">
    <location>
        <position position="296"/>
    </location>
    <ligand>
        <name>Ca(2+)</name>
        <dbReference type="ChEBI" id="CHEBI:29108"/>
    </ligand>
</feature>
<feature type="binding site" evidence="1">
    <location>
        <position position="322"/>
    </location>
    <ligand>
        <name>Ca(2+)</name>
        <dbReference type="ChEBI" id="CHEBI:29108"/>
    </ligand>
</feature>
<feature type="binding site" evidence="1">
    <location>
        <position position="368"/>
    </location>
    <ligand>
        <name>substrate</name>
    </ligand>
</feature>
<feature type="glycosylation site" description="N-linked (GlcNAc...) asparagine; by host" evidence="1">
    <location>
        <position position="42"/>
    </location>
</feature>
<feature type="glycosylation site" description="N-linked (GlcNAc...) asparagine; by host" evidence="1">
    <location>
        <position position="46"/>
    </location>
</feature>
<feature type="glycosylation site" description="N-linked (GlcNAc...) asparagine; by host" evidence="1">
    <location>
        <position position="54"/>
    </location>
</feature>
<feature type="glycosylation site" description="N-linked (GlcNAc...) asparagine; by host" evidence="1">
    <location>
        <position position="84"/>
    </location>
</feature>
<feature type="glycosylation site" description="N-linked (GlcNAc...) asparagine; by host" evidence="1">
    <location>
        <position position="144"/>
    </location>
</feature>
<feature type="glycosylation site" description="N-linked (GlcNAc...) asparagine; by host" evidence="1">
    <location>
        <position position="293"/>
    </location>
</feature>
<feature type="glycosylation site" description="N-linked (GlcNAc...) asparagine; by host" evidence="1">
    <location>
        <position position="398"/>
    </location>
</feature>
<feature type="disulfide bond" evidence="1">
    <location>
        <begin position="90"/>
        <end position="417"/>
    </location>
</feature>
<feature type="disulfide bond" evidence="1">
    <location>
        <begin position="122"/>
        <end position="127"/>
    </location>
</feature>
<feature type="disulfide bond" evidence="1">
    <location>
        <begin position="182"/>
        <end position="229"/>
    </location>
</feature>
<feature type="disulfide bond" evidence="1">
    <location>
        <begin position="231"/>
        <end position="236"/>
    </location>
</feature>
<feature type="disulfide bond" evidence="1">
    <location>
        <begin position="277"/>
        <end position="290"/>
    </location>
</feature>
<feature type="disulfide bond" evidence="1">
    <location>
        <begin position="279"/>
        <end position="288"/>
    </location>
</feature>
<feature type="disulfide bond" evidence="1">
    <location>
        <begin position="316"/>
        <end position="335"/>
    </location>
</feature>
<feature type="disulfide bond" evidence="1">
    <location>
        <begin position="421"/>
        <end position="446"/>
    </location>
</feature>
<dbReference type="EC" id="3.2.1.18" evidence="1"/>
<dbReference type="EMBL" id="AY531038">
    <property type="protein sequence ID" value="AAT08005.1"/>
    <property type="molecule type" value="Genomic_RNA"/>
</dbReference>
<dbReference type="SMR" id="Q595Z2"/>
<dbReference type="CAZy" id="GH34">
    <property type="family name" value="Glycoside Hydrolase Family 34"/>
</dbReference>
<dbReference type="GlyCosmos" id="Q595Z2">
    <property type="glycosylation" value="7 sites, No reported glycans"/>
</dbReference>
<dbReference type="GO" id="GO:0020002">
    <property type="term" value="C:host cell plasma membrane"/>
    <property type="evidence" value="ECO:0007669"/>
    <property type="project" value="UniProtKB-SubCell"/>
</dbReference>
<dbReference type="GO" id="GO:0016020">
    <property type="term" value="C:membrane"/>
    <property type="evidence" value="ECO:0007669"/>
    <property type="project" value="UniProtKB-UniRule"/>
</dbReference>
<dbReference type="GO" id="GO:0055036">
    <property type="term" value="C:virion membrane"/>
    <property type="evidence" value="ECO:0007669"/>
    <property type="project" value="UniProtKB-SubCell"/>
</dbReference>
<dbReference type="GO" id="GO:0004308">
    <property type="term" value="F:exo-alpha-sialidase activity"/>
    <property type="evidence" value="ECO:0007669"/>
    <property type="project" value="UniProtKB-UniRule"/>
</dbReference>
<dbReference type="GO" id="GO:0046872">
    <property type="term" value="F:metal ion binding"/>
    <property type="evidence" value="ECO:0007669"/>
    <property type="project" value="UniProtKB-UniRule"/>
</dbReference>
<dbReference type="GO" id="GO:0005975">
    <property type="term" value="P:carbohydrate metabolic process"/>
    <property type="evidence" value="ECO:0007669"/>
    <property type="project" value="InterPro"/>
</dbReference>
<dbReference type="GO" id="GO:0046761">
    <property type="term" value="P:viral budding from plasma membrane"/>
    <property type="evidence" value="ECO:0007669"/>
    <property type="project" value="UniProtKB-UniRule"/>
</dbReference>
<dbReference type="Gene3D" id="2.120.10.10">
    <property type="match status" value="1"/>
</dbReference>
<dbReference type="HAMAP" id="MF_04071">
    <property type="entry name" value="INFV_NRAM"/>
    <property type="match status" value="1"/>
</dbReference>
<dbReference type="InterPro" id="IPR001860">
    <property type="entry name" value="Glyco_hydro_34"/>
</dbReference>
<dbReference type="InterPro" id="IPR036278">
    <property type="entry name" value="Sialidase_sf"/>
</dbReference>
<dbReference type="Pfam" id="PF00064">
    <property type="entry name" value="Neur"/>
    <property type="match status" value="1"/>
</dbReference>
<dbReference type="SUPFAM" id="SSF50939">
    <property type="entry name" value="Sialidases"/>
    <property type="match status" value="1"/>
</dbReference>